<gene>
    <name type="ordered locus">CBU_1260</name>
</gene>
<comment type="subcellular location">
    <subcellularLocation>
        <location evidence="2">Cell outer membrane</location>
    </subcellularLocation>
</comment>
<reference key="1">
    <citation type="journal article" date="2003" name="Proc. Natl. Acad. Sci. U.S.A.">
        <title>Complete genome sequence of the Q-fever pathogen, Coxiella burnetii.</title>
        <authorList>
            <person name="Seshadri R."/>
            <person name="Paulsen I.T."/>
            <person name="Eisen J.A."/>
            <person name="Read T.D."/>
            <person name="Nelson K.E."/>
            <person name="Nelson W.C."/>
            <person name="Ward N.L."/>
            <person name="Tettelin H."/>
            <person name="Davidsen T.M."/>
            <person name="Beanan M.J."/>
            <person name="DeBoy R.T."/>
            <person name="Daugherty S.C."/>
            <person name="Brinkac L.M."/>
            <person name="Madupu R."/>
            <person name="Dodson R.J."/>
            <person name="Khouri H.M."/>
            <person name="Lee K.H."/>
            <person name="Carty H.A."/>
            <person name="Scanlan D."/>
            <person name="Heinzen R.A."/>
            <person name="Thompson H.A."/>
            <person name="Samuel J.E."/>
            <person name="Fraser C.M."/>
            <person name="Heidelberg J.F."/>
        </authorList>
    </citation>
    <scope>NUCLEOTIDE SEQUENCE [LARGE SCALE GENOMIC DNA]</scope>
    <source>
        <strain>RSA 493 / Nine Mile phase I</strain>
    </source>
</reference>
<protein>
    <recommendedName>
        <fullName>Uncharacterized protein CBU_1260</fullName>
    </recommendedName>
</protein>
<proteinExistence type="inferred from homology"/>
<organism>
    <name type="scientific">Coxiella burnetii (strain RSA 493 / Nine Mile phase I)</name>
    <dbReference type="NCBI Taxonomy" id="227377"/>
    <lineage>
        <taxon>Bacteria</taxon>
        <taxon>Pseudomonadati</taxon>
        <taxon>Pseudomonadota</taxon>
        <taxon>Gammaproteobacteria</taxon>
        <taxon>Legionellales</taxon>
        <taxon>Coxiellaceae</taxon>
        <taxon>Coxiella</taxon>
    </lineage>
</organism>
<feature type="signal peptide" evidence="1">
    <location>
        <begin position="1"/>
        <end position="23"/>
    </location>
</feature>
<feature type="chain" id="PRO_0000282832" description="Uncharacterized protein CBU_1260">
    <location>
        <begin position="24"/>
        <end position="248"/>
    </location>
</feature>
<accession>Q83C69</accession>
<evidence type="ECO:0000255" key="1"/>
<evidence type="ECO:0000305" key="2"/>
<name>Y1260_COXBU</name>
<dbReference type="EMBL" id="AE016828">
    <property type="protein sequence ID" value="AAO90768.1"/>
    <property type="molecule type" value="Genomic_DNA"/>
</dbReference>
<dbReference type="RefSeq" id="NP_820254.1">
    <property type="nucleotide sequence ID" value="NC_002971.4"/>
</dbReference>
<dbReference type="RefSeq" id="WP_010958108.1">
    <property type="nucleotide sequence ID" value="NC_002971.4"/>
</dbReference>
<dbReference type="SMR" id="Q83C69"/>
<dbReference type="STRING" id="227377.CBU_1260"/>
<dbReference type="EnsemblBacteria" id="AAO90768">
    <property type="protein sequence ID" value="AAO90768"/>
    <property type="gene ID" value="CBU_1260"/>
</dbReference>
<dbReference type="GeneID" id="1209165"/>
<dbReference type="KEGG" id="cbu:CBU_1260"/>
<dbReference type="PATRIC" id="fig|227377.7.peg.1251"/>
<dbReference type="eggNOG" id="COG3637">
    <property type="taxonomic scope" value="Bacteria"/>
</dbReference>
<dbReference type="HOGENOM" id="CLU_1118703_0_0_6"/>
<dbReference type="OrthoDB" id="5660141at2"/>
<dbReference type="PHI-base" id="PHI:4124"/>
<dbReference type="Proteomes" id="UP000002671">
    <property type="component" value="Chromosome"/>
</dbReference>
<dbReference type="GO" id="GO:0009279">
    <property type="term" value="C:cell outer membrane"/>
    <property type="evidence" value="ECO:0007669"/>
    <property type="project" value="UniProtKB-SubCell"/>
</dbReference>
<dbReference type="Gene3D" id="2.40.160.20">
    <property type="match status" value="1"/>
</dbReference>
<dbReference type="InterPro" id="IPR011250">
    <property type="entry name" value="OMP/PagP_b-brl"/>
</dbReference>
<dbReference type="InterPro" id="IPR027385">
    <property type="entry name" value="OMP_b-brl"/>
</dbReference>
<dbReference type="Pfam" id="PF13505">
    <property type="entry name" value="OMP_b-brl"/>
    <property type="match status" value="1"/>
</dbReference>
<dbReference type="SUPFAM" id="SSF56925">
    <property type="entry name" value="OMPA-like"/>
    <property type="match status" value="1"/>
</dbReference>
<keyword id="KW-0998">Cell outer membrane</keyword>
<keyword id="KW-0472">Membrane</keyword>
<keyword id="KW-1185">Reference proteome</keyword>
<keyword id="KW-0732">Signal</keyword>
<sequence length="248" mass="26254">MLKKIVIGVTATAAFGIGAGALAGGSVDQSYNNTSGAGFYVRGEAGYGLVDKKSGTSKVNFTGVTLTENSHTNTKKSRGFNGRVAIGYAFNPYFSLESGFTYYHPAYRDVNIAGSALPLFSSVQAEGRQKINLYSIDLMGKATLPIDNFYAFIEGGVAYVHTKFVAFTETGTAVSPLLPPVTSSVAVKVPSSSKGYIRPKAGIGVGYNITQNIGVDVSYSRVFGQGKINNTNYLPNLNAVTLGLTYKF</sequence>